<organism>
    <name type="scientific">Cyanidioschyzon merolae (strain NIES-3377 / 10D)</name>
    <name type="common">Unicellular red alga</name>
    <dbReference type="NCBI Taxonomy" id="280699"/>
    <lineage>
        <taxon>Eukaryota</taxon>
        <taxon>Rhodophyta</taxon>
        <taxon>Bangiophyceae</taxon>
        <taxon>Cyanidiales</taxon>
        <taxon>Cyanidiaceae</taxon>
        <taxon>Cyanidioschyzon</taxon>
    </lineage>
</organism>
<proteinExistence type="inferred from homology"/>
<gene>
    <name type="primary">rps7</name>
</gene>
<sequence length="148" mass="16707">MTDQGMTDQSMKSRLVELLIVHVLRKGKKSLARRIVYEALKRIEERNQQSGVLMLEQAVSQVMPLVCVKARRVGGATYQVPQEVKPYTGINNALRWIVKYAKDRSGKSMAIKLAAEIWDAAHGTGGAIRKKEETHRMAEANKAFAHYR</sequence>
<name>RR7_CYAM1</name>
<dbReference type="EMBL" id="AB002583">
    <property type="protein sequence ID" value="BAC76257.1"/>
    <property type="molecule type" value="Genomic_DNA"/>
</dbReference>
<dbReference type="RefSeq" id="NP_849095.2">
    <property type="nucleotide sequence ID" value="NC_004799.1"/>
</dbReference>
<dbReference type="SMR" id="Q85FT8"/>
<dbReference type="STRING" id="280699.Q85FT8"/>
<dbReference type="EnsemblPlants" id="CMV190CT">
    <property type="protein sequence ID" value="CMV190CT"/>
    <property type="gene ID" value="CMV190C"/>
</dbReference>
<dbReference type="GeneID" id="845014"/>
<dbReference type="Gramene" id="CMV190CT">
    <property type="protein sequence ID" value="CMV190CT"/>
    <property type="gene ID" value="CMV190C"/>
</dbReference>
<dbReference type="KEGG" id="cme:CymeCp163"/>
<dbReference type="eggNOG" id="KOG3291">
    <property type="taxonomic scope" value="Eukaryota"/>
</dbReference>
<dbReference type="HOGENOM" id="CLU_072226_1_1_1"/>
<dbReference type="Proteomes" id="UP000007014">
    <property type="component" value="Chloroplast"/>
</dbReference>
<dbReference type="GO" id="GO:0009507">
    <property type="term" value="C:chloroplast"/>
    <property type="evidence" value="ECO:0007669"/>
    <property type="project" value="UniProtKB-SubCell"/>
</dbReference>
<dbReference type="GO" id="GO:0015935">
    <property type="term" value="C:small ribosomal subunit"/>
    <property type="evidence" value="ECO:0007669"/>
    <property type="project" value="InterPro"/>
</dbReference>
<dbReference type="GO" id="GO:0019843">
    <property type="term" value="F:rRNA binding"/>
    <property type="evidence" value="ECO:0007669"/>
    <property type="project" value="UniProtKB-UniRule"/>
</dbReference>
<dbReference type="GO" id="GO:0003735">
    <property type="term" value="F:structural constituent of ribosome"/>
    <property type="evidence" value="ECO:0007669"/>
    <property type="project" value="InterPro"/>
</dbReference>
<dbReference type="GO" id="GO:0006412">
    <property type="term" value="P:translation"/>
    <property type="evidence" value="ECO:0007669"/>
    <property type="project" value="UniProtKB-UniRule"/>
</dbReference>
<dbReference type="CDD" id="cd14871">
    <property type="entry name" value="uS7_Chloroplast"/>
    <property type="match status" value="1"/>
</dbReference>
<dbReference type="FunFam" id="1.10.455.10:FF:000001">
    <property type="entry name" value="30S ribosomal protein S7"/>
    <property type="match status" value="1"/>
</dbReference>
<dbReference type="Gene3D" id="1.10.455.10">
    <property type="entry name" value="Ribosomal protein S7 domain"/>
    <property type="match status" value="1"/>
</dbReference>
<dbReference type="HAMAP" id="MF_00480_B">
    <property type="entry name" value="Ribosomal_uS7_B"/>
    <property type="match status" value="1"/>
</dbReference>
<dbReference type="InterPro" id="IPR000235">
    <property type="entry name" value="Ribosomal_uS7"/>
</dbReference>
<dbReference type="InterPro" id="IPR005717">
    <property type="entry name" value="Ribosomal_uS7_bac/org-type"/>
</dbReference>
<dbReference type="InterPro" id="IPR020606">
    <property type="entry name" value="Ribosomal_uS7_CS"/>
</dbReference>
<dbReference type="InterPro" id="IPR023798">
    <property type="entry name" value="Ribosomal_uS7_dom"/>
</dbReference>
<dbReference type="InterPro" id="IPR036823">
    <property type="entry name" value="Ribosomal_uS7_dom_sf"/>
</dbReference>
<dbReference type="NCBIfam" id="TIGR01029">
    <property type="entry name" value="rpsG_bact"/>
    <property type="match status" value="1"/>
</dbReference>
<dbReference type="PANTHER" id="PTHR11205">
    <property type="entry name" value="RIBOSOMAL PROTEIN S7"/>
    <property type="match status" value="1"/>
</dbReference>
<dbReference type="Pfam" id="PF00177">
    <property type="entry name" value="Ribosomal_S7"/>
    <property type="match status" value="1"/>
</dbReference>
<dbReference type="PIRSF" id="PIRSF002122">
    <property type="entry name" value="RPS7p_RPS7a_RPS5e_RPS7o"/>
    <property type="match status" value="1"/>
</dbReference>
<dbReference type="SUPFAM" id="SSF47973">
    <property type="entry name" value="Ribosomal protein S7"/>
    <property type="match status" value="1"/>
</dbReference>
<dbReference type="PROSITE" id="PS00052">
    <property type="entry name" value="RIBOSOMAL_S7"/>
    <property type="match status" value="1"/>
</dbReference>
<comment type="function">
    <text evidence="1">One of the primary rRNA binding proteins, it binds directly to 16S rRNA where it nucleates assembly of the head domain of the 30S subunit.</text>
</comment>
<comment type="subunit">
    <text>Part of the 30S ribosomal subunit.</text>
</comment>
<comment type="subcellular location">
    <subcellularLocation>
        <location>Plastid</location>
        <location>Chloroplast</location>
    </subcellularLocation>
</comment>
<comment type="similarity">
    <text evidence="2">Belongs to the universal ribosomal protein uS7 family.</text>
</comment>
<protein>
    <recommendedName>
        <fullName evidence="2">Small ribosomal subunit protein uS7c</fullName>
    </recommendedName>
    <alternativeName>
        <fullName>30S ribosomal protein S7, chloroplastic</fullName>
    </alternativeName>
</protein>
<geneLocation type="chloroplast"/>
<feature type="chain" id="PRO_0000277065" description="Small ribosomal subunit protein uS7c">
    <location>
        <begin position="1"/>
        <end position="148"/>
    </location>
</feature>
<keyword id="KW-0150">Chloroplast</keyword>
<keyword id="KW-0934">Plastid</keyword>
<keyword id="KW-1185">Reference proteome</keyword>
<keyword id="KW-0687">Ribonucleoprotein</keyword>
<keyword id="KW-0689">Ribosomal protein</keyword>
<keyword id="KW-0694">RNA-binding</keyword>
<keyword id="KW-0699">rRNA-binding</keyword>
<evidence type="ECO:0000250" key="1"/>
<evidence type="ECO:0000305" key="2"/>
<accession>Q85FT8</accession>
<reference key="1">
    <citation type="journal article" date="2003" name="DNA Res.">
        <title>Complete sequence and analysis of the plastid genome of the unicellular red alga Cyanidioschyzon merolae.</title>
        <authorList>
            <person name="Ohta N."/>
            <person name="Matsuzaki M."/>
            <person name="Misumi O."/>
            <person name="Miyagishima S.-Y."/>
            <person name="Nozaki H."/>
            <person name="Tanaka K."/>
            <person name="Shin-i T."/>
            <person name="Kohara Y."/>
            <person name="Kuroiwa T."/>
        </authorList>
    </citation>
    <scope>NUCLEOTIDE SEQUENCE [LARGE SCALE GENOMIC DNA]</scope>
    <source>
        <strain>NIES-3377 / 10D</strain>
    </source>
</reference>